<sequence length="204" mass="23432">MAFNARSCCFASSNERVTCNCNCLKDQPVPRMKHSKDPFEAAMEEQEESPVETEQTLEGDERAVKKCKTSVVAEAKNKDEVEFTKNITGADPVTRANKMQKILSQFTEEQMSRYESFRRSGFKKSDMEKLVQRITGGPKMDDTMNIVVRGIAKMFVGDLVETARVVMRERKESGPIRPCHIRESYRRLKLQGKVPQRSVQRLFR</sequence>
<feature type="chain" id="PRO_0000424049" description="Transcription initiation factor TFIID subunit 11b">
    <location>
        <begin position="1"/>
        <end position="204"/>
    </location>
</feature>
<feature type="domain" description="Histone-fold">
    <location>
        <begin position="106"/>
        <end position="195"/>
    </location>
</feature>
<feature type="region of interest" description="Disordered" evidence="2">
    <location>
        <begin position="38"/>
        <end position="60"/>
    </location>
</feature>
<feature type="compositionally biased region" description="Acidic residues" evidence="2">
    <location>
        <begin position="42"/>
        <end position="58"/>
    </location>
</feature>
<dbReference type="EMBL" id="AC022472">
    <property type="protein sequence ID" value="AAF79913.1"/>
    <property type="status" value="ALT_SEQ"/>
    <property type="molecule type" value="Genomic_DNA"/>
</dbReference>
<dbReference type="EMBL" id="CP002684">
    <property type="protein sequence ID" value="AEE29921.1"/>
    <property type="molecule type" value="Genomic_DNA"/>
</dbReference>
<dbReference type="PIR" id="D86333">
    <property type="entry name" value="D86333"/>
</dbReference>
<dbReference type="RefSeq" id="NP_173429.1">
    <property type="nucleotide sequence ID" value="NM_101855.1"/>
</dbReference>
<dbReference type="SMR" id="F4HR03"/>
<dbReference type="FunCoup" id="F4HR03">
    <property type="interactions" value="2677"/>
</dbReference>
<dbReference type="IntAct" id="F4HR03">
    <property type="interactions" value="1"/>
</dbReference>
<dbReference type="STRING" id="3702.F4HR03"/>
<dbReference type="PaxDb" id="3702-AT1G20000.1"/>
<dbReference type="EnsemblPlants" id="AT1G20000.1">
    <property type="protein sequence ID" value="AT1G20000.1"/>
    <property type="gene ID" value="AT1G20000"/>
</dbReference>
<dbReference type="GeneID" id="838589"/>
<dbReference type="Gramene" id="AT1G20000.1">
    <property type="protein sequence ID" value="AT1G20000.1"/>
    <property type="gene ID" value="AT1G20000"/>
</dbReference>
<dbReference type="KEGG" id="ath:AT1G20000"/>
<dbReference type="Araport" id="AT1G20000"/>
<dbReference type="TAIR" id="AT1G20000">
    <property type="gene designation" value="TAF11B"/>
</dbReference>
<dbReference type="eggNOG" id="KOG3219">
    <property type="taxonomic scope" value="Eukaryota"/>
</dbReference>
<dbReference type="HOGENOM" id="CLU_088696_1_0_1"/>
<dbReference type="InParanoid" id="F4HR03"/>
<dbReference type="OMA" id="FNARSCC"/>
<dbReference type="OrthoDB" id="28335at2759"/>
<dbReference type="PRO" id="PR:F4HR03"/>
<dbReference type="Proteomes" id="UP000006548">
    <property type="component" value="Chromosome 1"/>
</dbReference>
<dbReference type="ExpressionAtlas" id="F4HR03">
    <property type="expression patterns" value="baseline"/>
</dbReference>
<dbReference type="GO" id="GO:0005669">
    <property type="term" value="C:transcription factor TFIID complex"/>
    <property type="evidence" value="ECO:0007669"/>
    <property type="project" value="InterPro"/>
</dbReference>
<dbReference type="GO" id="GO:0046982">
    <property type="term" value="F:protein heterodimerization activity"/>
    <property type="evidence" value="ECO:0007669"/>
    <property type="project" value="InterPro"/>
</dbReference>
<dbReference type="GO" id="GO:0051123">
    <property type="term" value="P:RNA polymerase II preinitiation complex assembly"/>
    <property type="evidence" value="ECO:0007669"/>
    <property type="project" value="InterPro"/>
</dbReference>
<dbReference type="CDD" id="cd08048">
    <property type="entry name" value="HFD_TAF11"/>
    <property type="match status" value="1"/>
</dbReference>
<dbReference type="FunFam" id="1.10.20.10:FF:000055">
    <property type="entry name" value="Transcription initiation factor TFIID subunit 11"/>
    <property type="match status" value="1"/>
</dbReference>
<dbReference type="Gene3D" id="1.10.20.10">
    <property type="entry name" value="Histone, subunit A"/>
    <property type="match status" value="1"/>
</dbReference>
<dbReference type="InterPro" id="IPR009072">
    <property type="entry name" value="Histone-fold"/>
</dbReference>
<dbReference type="InterPro" id="IPR045127">
    <property type="entry name" value="TAF11-like"/>
</dbReference>
<dbReference type="InterPro" id="IPR006809">
    <property type="entry name" value="TAFII28_dom"/>
</dbReference>
<dbReference type="PANTHER" id="PTHR13218:SF8">
    <property type="entry name" value="TRANSCRIPTION INITIATION FACTOR TFIID SUBUNIT 11"/>
    <property type="match status" value="1"/>
</dbReference>
<dbReference type="PANTHER" id="PTHR13218">
    <property type="entry name" value="TRANSCRIPTION INITIATION FACTOR TFIID SUBUNIT 11-RELATED"/>
    <property type="match status" value="1"/>
</dbReference>
<dbReference type="Pfam" id="PF04719">
    <property type="entry name" value="TAFII28"/>
    <property type="match status" value="1"/>
</dbReference>
<dbReference type="SUPFAM" id="SSF47113">
    <property type="entry name" value="Histone-fold"/>
    <property type="match status" value="1"/>
</dbReference>
<name>TA11B_ARATH</name>
<protein>
    <recommendedName>
        <fullName>Transcription initiation factor TFIID subunit 11b</fullName>
    </recommendedName>
    <alternativeName>
        <fullName>TBP-associated factor 11b</fullName>
        <shortName>AtTAF11b</shortName>
    </alternativeName>
</protein>
<accession>F4HR03</accession>
<accession>Q9LNS8</accession>
<evidence type="ECO:0000250" key="1"/>
<evidence type="ECO:0000256" key="2">
    <source>
        <dbReference type="SAM" id="MobiDB-lite"/>
    </source>
</evidence>
<evidence type="ECO:0000269" key="3">
    <source>
    </source>
</evidence>
<evidence type="ECO:0000305" key="4"/>
<gene>
    <name type="primary">TAF11B</name>
    <name type="ordered locus">At1g20000</name>
    <name type="ORF">T20H2.22</name>
</gene>
<organism>
    <name type="scientific">Arabidopsis thaliana</name>
    <name type="common">Mouse-ear cress</name>
    <dbReference type="NCBI Taxonomy" id="3702"/>
    <lineage>
        <taxon>Eukaryota</taxon>
        <taxon>Viridiplantae</taxon>
        <taxon>Streptophyta</taxon>
        <taxon>Embryophyta</taxon>
        <taxon>Tracheophyta</taxon>
        <taxon>Spermatophyta</taxon>
        <taxon>Magnoliopsida</taxon>
        <taxon>eudicotyledons</taxon>
        <taxon>Gunneridae</taxon>
        <taxon>Pentapetalae</taxon>
        <taxon>rosids</taxon>
        <taxon>malvids</taxon>
        <taxon>Brassicales</taxon>
        <taxon>Brassicaceae</taxon>
        <taxon>Camelineae</taxon>
        <taxon>Arabidopsis</taxon>
    </lineage>
</organism>
<comment type="function">
    <text evidence="1">TAFs are components of the transcription factor IID (TFIID) complex that is essential for mediating regulation of RNA polymerase transcription.</text>
</comment>
<comment type="subunit">
    <text>Component of the TFIID complex. TFIID is composed of TATA binding protein (TBP) and a number of TBP-associated factors (TAFs) whose MWs range from 14-217 kDa.</text>
</comment>
<comment type="subcellular location">
    <subcellularLocation>
        <location evidence="4">Nucleus</location>
    </subcellularLocation>
</comment>
<comment type="tissue specificity">
    <text evidence="3">Expressed in roots, leaves and inflorescences.</text>
</comment>
<comment type="similarity">
    <text evidence="4">Belongs to the TAF11 family.</text>
</comment>
<comment type="sequence caution" evidence="4">
    <conflict type="erroneous gene model prediction">
        <sequence resource="EMBL-CDS" id="AAF79913"/>
    </conflict>
</comment>
<keyword id="KW-0010">Activator</keyword>
<keyword id="KW-0539">Nucleus</keyword>
<keyword id="KW-1185">Reference proteome</keyword>
<keyword id="KW-0804">Transcription</keyword>
<keyword id="KW-0805">Transcription regulation</keyword>
<proteinExistence type="evidence at transcript level"/>
<reference key="1">
    <citation type="journal article" date="2004" name="Gene">
        <title>TBP-associated factors in Arabidopsis.</title>
        <authorList>
            <person name="Lago C."/>
            <person name="Clerici E."/>
            <person name="Mizzi L."/>
            <person name="Colombo L."/>
            <person name="Kater M.M."/>
        </authorList>
    </citation>
    <scope>NUCLEOTIDE SEQUENCE [MRNA]</scope>
    <scope>IDENTIFICATION</scope>
    <scope>NOMENCLATURE</scope>
    <scope>TISSUE SPECIFICITY</scope>
</reference>
<reference key="2">
    <citation type="journal article" date="2000" name="Nature">
        <title>Sequence and analysis of chromosome 1 of the plant Arabidopsis thaliana.</title>
        <authorList>
            <person name="Theologis A."/>
            <person name="Ecker J.R."/>
            <person name="Palm C.J."/>
            <person name="Federspiel N.A."/>
            <person name="Kaul S."/>
            <person name="White O."/>
            <person name="Alonso J."/>
            <person name="Altafi H."/>
            <person name="Araujo R."/>
            <person name="Bowman C.L."/>
            <person name="Brooks S.Y."/>
            <person name="Buehler E."/>
            <person name="Chan A."/>
            <person name="Chao Q."/>
            <person name="Chen H."/>
            <person name="Cheuk R.F."/>
            <person name="Chin C.W."/>
            <person name="Chung M.K."/>
            <person name="Conn L."/>
            <person name="Conway A.B."/>
            <person name="Conway A.R."/>
            <person name="Creasy T.H."/>
            <person name="Dewar K."/>
            <person name="Dunn P."/>
            <person name="Etgu P."/>
            <person name="Feldblyum T.V."/>
            <person name="Feng J.-D."/>
            <person name="Fong B."/>
            <person name="Fujii C.Y."/>
            <person name="Gill J.E."/>
            <person name="Goldsmith A.D."/>
            <person name="Haas B."/>
            <person name="Hansen N.F."/>
            <person name="Hughes B."/>
            <person name="Huizar L."/>
            <person name="Hunter J.L."/>
            <person name="Jenkins J."/>
            <person name="Johnson-Hopson C."/>
            <person name="Khan S."/>
            <person name="Khaykin E."/>
            <person name="Kim C.J."/>
            <person name="Koo H.L."/>
            <person name="Kremenetskaia I."/>
            <person name="Kurtz D.B."/>
            <person name="Kwan A."/>
            <person name="Lam B."/>
            <person name="Langin-Hooper S."/>
            <person name="Lee A."/>
            <person name="Lee J.M."/>
            <person name="Lenz C.A."/>
            <person name="Li J.H."/>
            <person name="Li Y.-P."/>
            <person name="Lin X."/>
            <person name="Liu S.X."/>
            <person name="Liu Z.A."/>
            <person name="Luros J.S."/>
            <person name="Maiti R."/>
            <person name="Marziali A."/>
            <person name="Militscher J."/>
            <person name="Miranda M."/>
            <person name="Nguyen M."/>
            <person name="Nierman W.C."/>
            <person name="Osborne B.I."/>
            <person name="Pai G."/>
            <person name="Peterson J."/>
            <person name="Pham P.K."/>
            <person name="Rizzo M."/>
            <person name="Rooney T."/>
            <person name="Rowley D."/>
            <person name="Sakano H."/>
            <person name="Salzberg S.L."/>
            <person name="Schwartz J.R."/>
            <person name="Shinn P."/>
            <person name="Southwick A.M."/>
            <person name="Sun H."/>
            <person name="Tallon L.J."/>
            <person name="Tambunga G."/>
            <person name="Toriumi M.J."/>
            <person name="Town C.D."/>
            <person name="Utterback T."/>
            <person name="Van Aken S."/>
            <person name="Vaysberg M."/>
            <person name="Vysotskaia V.S."/>
            <person name="Walker M."/>
            <person name="Wu D."/>
            <person name="Yu G."/>
            <person name="Fraser C.M."/>
            <person name="Venter J.C."/>
            <person name="Davis R.W."/>
        </authorList>
    </citation>
    <scope>NUCLEOTIDE SEQUENCE [LARGE SCALE GENOMIC DNA]</scope>
    <source>
        <strain>cv. Columbia</strain>
    </source>
</reference>
<reference key="3">
    <citation type="journal article" date="2017" name="Plant J.">
        <title>Araport11: a complete reannotation of the Arabidopsis thaliana reference genome.</title>
        <authorList>
            <person name="Cheng C.Y."/>
            <person name="Krishnakumar V."/>
            <person name="Chan A.P."/>
            <person name="Thibaud-Nissen F."/>
            <person name="Schobel S."/>
            <person name="Town C.D."/>
        </authorList>
    </citation>
    <scope>GENOME REANNOTATION</scope>
    <source>
        <strain>cv. Columbia</strain>
    </source>
</reference>